<reference key="1">
    <citation type="journal article" date="2005" name="PLoS Genet.">
        <title>Life in hot carbon monoxide: the complete genome sequence of Carboxydothermus hydrogenoformans Z-2901.</title>
        <authorList>
            <person name="Wu M."/>
            <person name="Ren Q."/>
            <person name="Durkin A.S."/>
            <person name="Daugherty S.C."/>
            <person name="Brinkac L.M."/>
            <person name="Dodson R.J."/>
            <person name="Madupu R."/>
            <person name="Sullivan S.A."/>
            <person name="Kolonay J.F."/>
            <person name="Nelson W.C."/>
            <person name="Tallon L.J."/>
            <person name="Jones K.M."/>
            <person name="Ulrich L.E."/>
            <person name="Gonzalez J.M."/>
            <person name="Zhulin I.B."/>
            <person name="Robb F.T."/>
            <person name="Eisen J.A."/>
        </authorList>
    </citation>
    <scope>NUCLEOTIDE SEQUENCE [LARGE SCALE GENOMIC DNA]</scope>
    <source>
        <strain>ATCC BAA-161 / DSM 6008 / Z-2901</strain>
    </source>
</reference>
<reference key="2">
    <citation type="submission" date="2000-03" db="EMBL/GenBank/DDBJ databases">
        <title>A genomic survey of the extreme thermophilic, CO-utilizing bacterium Carboxydothermus hydrogenoformans.</title>
        <authorList>
            <person name="Gonzalez J.M."/>
            <person name="Robb F.T."/>
        </authorList>
    </citation>
    <scope>NUCLEOTIDE SEQUENCE [GENOMIC DNA] OF 98-329</scope>
</reference>
<feature type="chain" id="PRO_0000114506" description="Alanine racemase">
    <location>
        <begin position="1"/>
        <end position="368"/>
    </location>
</feature>
<feature type="active site" description="Proton acceptor; specific for D-alanine" evidence="1">
    <location>
        <position position="34"/>
    </location>
</feature>
<feature type="active site" description="Proton acceptor; specific for L-alanine" evidence="1">
    <location>
        <position position="261"/>
    </location>
</feature>
<feature type="binding site" evidence="1">
    <location>
        <position position="132"/>
    </location>
    <ligand>
        <name>substrate</name>
    </ligand>
</feature>
<feature type="binding site" evidence="1">
    <location>
        <position position="309"/>
    </location>
    <ligand>
        <name>substrate</name>
    </ligand>
</feature>
<feature type="modified residue" description="N6-(pyridoxal phosphate)lysine" evidence="1">
    <location>
        <position position="34"/>
    </location>
</feature>
<feature type="sequence conflict" description="In Ref. 2; AAG23602." evidence="2" ref="2">
    <original>PTLHHR</original>
    <variation>AGRTGP</variation>
    <location>
        <begin position="98"/>
        <end position="103"/>
    </location>
</feature>
<feature type="sequence conflict" description="In Ref. 2; AAG23602." evidence="2" ref="2">
    <original>A</original>
    <variation>T</variation>
    <location>
        <position position="304"/>
    </location>
</feature>
<feature type="sequence conflict" description="In Ref. 2; AAG23602." evidence="2" ref="2">
    <original>AV</original>
    <variation>RW</variation>
    <location>
        <begin position="315"/>
        <end position="316"/>
    </location>
</feature>
<feature type="sequence conflict" description="In Ref. 2; AAG23602." evidence="2" ref="2">
    <original>N</original>
    <variation>L</variation>
    <location>
        <position position="323"/>
    </location>
</feature>
<comment type="function">
    <text evidence="1">Catalyzes the interconversion of L-alanine and D-alanine. May also act on other amino acids.</text>
</comment>
<comment type="catalytic activity">
    <reaction evidence="1">
        <text>L-alanine = D-alanine</text>
        <dbReference type="Rhea" id="RHEA:20249"/>
        <dbReference type="ChEBI" id="CHEBI:57416"/>
        <dbReference type="ChEBI" id="CHEBI:57972"/>
        <dbReference type="EC" id="5.1.1.1"/>
    </reaction>
</comment>
<comment type="cofactor">
    <cofactor evidence="1">
        <name>pyridoxal 5'-phosphate</name>
        <dbReference type="ChEBI" id="CHEBI:597326"/>
    </cofactor>
</comment>
<comment type="pathway">
    <text evidence="1">Amino-acid biosynthesis; D-alanine biosynthesis; D-alanine from L-alanine: step 1/1.</text>
</comment>
<comment type="similarity">
    <text evidence="1">Belongs to the alanine racemase family.</text>
</comment>
<name>ALR_CARHZ</name>
<keyword id="KW-0413">Isomerase</keyword>
<keyword id="KW-0663">Pyridoxal phosphate</keyword>
<keyword id="KW-1185">Reference proteome</keyword>
<dbReference type="EC" id="5.1.1.1" evidence="1"/>
<dbReference type="EMBL" id="CP000141">
    <property type="protein sequence ID" value="ABB13915.1"/>
    <property type="molecule type" value="Genomic_DNA"/>
</dbReference>
<dbReference type="EMBL" id="AF244653">
    <property type="protein sequence ID" value="AAG23602.1"/>
    <property type="molecule type" value="Genomic_DNA"/>
</dbReference>
<dbReference type="RefSeq" id="WP_011343598.1">
    <property type="nucleotide sequence ID" value="NC_007503.1"/>
</dbReference>
<dbReference type="SMR" id="Q9F8I0"/>
<dbReference type="FunCoup" id="Q9F8I0">
    <property type="interactions" value="257"/>
</dbReference>
<dbReference type="STRING" id="246194.CHY_0667"/>
<dbReference type="KEGG" id="chy:CHY_0667"/>
<dbReference type="eggNOG" id="COG0787">
    <property type="taxonomic scope" value="Bacteria"/>
</dbReference>
<dbReference type="HOGENOM" id="CLU_028393_2_2_9"/>
<dbReference type="InParanoid" id="Q9F8I0"/>
<dbReference type="OrthoDB" id="9813814at2"/>
<dbReference type="UniPathway" id="UPA00042">
    <property type="reaction ID" value="UER00497"/>
</dbReference>
<dbReference type="Proteomes" id="UP000002706">
    <property type="component" value="Chromosome"/>
</dbReference>
<dbReference type="GO" id="GO:0005829">
    <property type="term" value="C:cytosol"/>
    <property type="evidence" value="ECO:0007669"/>
    <property type="project" value="TreeGrafter"/>
</dbReference>
<dbReference type="GO" id="GO:0008784">
    <property type="term" value="F:alanine racemase activity"/>
    <property type="evidence" value="ECO:0007669"/>
    <property type="project" value="UniProtKB-UniRule"/>
</dbReference>
<dbReference type="GO" id="GO:0030170">
    <property type="term" value="F:pyridoxal phosphate binding"/>
    <property type="evidence" value="ECO:0007669"/>
    <property type="project" value="UniProtKB-UniRule"/>
</dbReference>
<dbReference type="GO" id="GO:0030632">
    <property type="term" value="P:D-alanine biosynthetic process"/>
    <property type="evidence" value="ECO:0007669"/>
    <property type="project" value="UniProtKB-UniRule"/>
</dbReference>
<dbReference type="GO" id="GO:0009252">
    <property type="term" value="P:peptidoglycan biosynthetic process"/>
    <property type="evidence" value="ECO:0007669"/>
    <property type="project" value="TreeGrafter"/>
</dbReference>
<dbReference type="CDD" id="cd00430">
    <property type="entry name" value="PLPDE_III_AR"/>
    <property type="match status" value="1"/>
</dbReference>
<dbReference type="FunFam" id="2.40.37.10:FF:000006">
    <property type="entry name" value="Alanine racemase"/>
    <property type="match status" value="1"/>
</dbReference>
<dbReference type="FunFam" id="3.20.20.10:FF:000002">
    <property type="entry name" value="Alanine racemase"/>
    <property type="match status" value="1"/>
</dbReference>
<dbReference type="Gene3D" id="3.20.20.10">
    <property type="entry name" value="Alanine racemase"/>
    <property type="match status" value="1"/>
</dbReference>
<dbReference type="Gene3D" id="2.40.37.10">
    <property type="entry name" value="Lyase, Ornithine Decarboxylase, Chain A, domain 1"/>
    <property type="match status" value="1"/>
</dbReference>
<dbReference type="HAMAP" id="MF_01201">
    <property type="entry name" value="Ala_racemase"/>
    <property type="match status" value="1"/>
</dbReference>
<dbReference type="InterPro" id="IPR000821">
    <property type="entry name" value="Ala_racemase"/>
</dbReference>
<dbReference type="InterPro" id="IPR009006">
    <property type="entry name" value="Ala_racemase/Decarboxylase_C"/>
</dbReference>
<dbReference type="InterPro" id="IPR011079">
    <property type="entry name" value="Ala_racemase_C"/>
</dbReference>
<dbReference type="InterPro" id="IPR001608">
    <property type="entry name" value="Ala_racemase_N"/>
</dbReference>
<dbReference type="InterPro" id="IPR020622">
    <property type="entry name" value="Ala_racemase_pyridoxalP-BS"/>
</dbReference>
<dbReference type="InterPro" id="IPR029066">
    <property type="entry name" value="PLP-binding_barrel"/>
</dbReference>
<dbReference type="NCBIfam" id="TIGR00492">
    <property type="entry name" value="alr"/>
    <property type="match status" value="1"/>
</dbReference>
<dbReference type="PANTHER" id="PTHR30511">
    <property type="entry name" value="ALANINE RACEMASE"/>
    <property type="match status" value="1"/>
</dbReference>
<dbReference type="PANTHER" id="PTHR30511:SF0">
    <property type="entry name" value="ALANINE RACEMASE, CATABOLIC-RELATED"/>
    <property type="match status" value="1"/>
</dbReference>
<dbReference type="Pfam" id="PF00842">
    <property type="entry name" value="Ala_racemase_C"/>
    <property type="match status" value="1"/>
</dbReference>
<dbReference type="Pfam" id="PF01168">
    <property type="entry name" value="Ala_racemase_N"/>
    <property type="match status" value="1"/>
</dbReference>
<dbReference type="PRINTS" id="PR00992">
    <property type="entry name" value="ALARACEMASE"/>
</dbReference>
<dbReference type="SMART" id="SM01005">
    <property type="entry name" value="Ala_racemase_C"/>
    <property type="match status" value="1"/>
</dbReference>
<dbReference type="SUPFAM" id="SSF50621">
    <property type="entry name" value="Alanine racemase C-terminal domain-like"/>
    <property type="match status" value="1"/>
</dbReference>
<dbReference type="SUPFAM" id="SSF51419">
    <property type="entry name" value="PLP-binding barrel"/>
    <property type="match status" value="1"/>
</dbReference>
<dbReference type="PROSITE" id="PS00395">
    <property type="entry name" value="ALANINE_RACEMASE"/>
    <property type="match status" value="1"/>
</dbReference>
<gene>
    <name type="primary">alr</name>
    <name type="ordered locus">CHY_0667</name>
</gene>
<protein>
    <recommendedName>
        <fullName evidence="1">Alanine racemase</fullName>
        <ecNumber evidence="1">5.1.1.1</ecNumber>
    </recommendedName>
</protein>
<organism>
    <name type="scientific">Carboxydothermus hydrogenoformans (strain ATCC BAA-161 / DSM 6008 / Z-2901)</name>
    <dbReference type="NCBI Taxonomy" id="246194"/>
    <lineage>
        <taxon>Bacteria</taxon>
        <taxon>Bacillati</taxon>
        <taxon>Bacillota</taxon>
        <taxon>Clostridia</taxon>
        <taxon>Thermoanaerobacterales</taxon>
        <taxon>Thermoanaerobacteraceae</taxon>
        <taxon>Carboxydothermus</taxon>
    </lineage>
</organism>
<evidence type="ECO:0000255" key="1">
    <source>
        <dbReference type="HAMAP-Rule" id="MF_01201"/>
    </source>
</evidence>
<evidence type="ECO:0000305" key="2"/>
<sequence length="368" mass="41632">MRPVWAEVNLENIRHNFREVKRLARQAEAMPVIKANAYGHGAVEVAKALIAEGAKRFAVAILDEGIKLREAGIDAPVLILGYTPPEEVEKLLFYNLTPTLHHRELALAYQERLERLKKTLFYHLKIDTGMGRIGFWYEELEKIEEVLKLKNLEAEGVYTHFARADEQDLSFSKLQIERFNIVLKHLKAKGIEVKYRHAANSAAIMRLPEAHYDLVRPGIMLYGEYPSRDVPRELAHLKPALTLKARVSQVKKVPAGFTVSYGSTYVTSKATLIVSLPLGYADGYFRRLSNRGVVLINGKRWSIAGRVCMDQLMVAVDETERVNPGDEAVLLGKQGEETITAMEMADLVGTINYEILTNISYRVPRIYV</sequence>
<proteinExistence type="inferred from homology"/>
<accession>Q9F8I0</accession>
<accession>Q3AEB2</accession>